<dbReference type="EC" id="7.6.2.-" evidence="1"/>
<dbReference type="EMBL" id="CP000124">
    <property type="protein sequence ID" value="ABA50649.1"/>
    <property type="status" value="ALT_INIT"/>
    <property type="molecule type" value="Genomic_DNA"/>
</dbReference>
<dbReference type="RefSeq" id="WP_004193505.1">
    <property type="nucleotide sequence ID" value="NC_007434.1"/>
</dbReference>
<dbReference type="SMR" id="Q3JSQ0"/>
<dbReference type="EnsemblBacteria" id="ABA50649">
    <property type="protein sequence ID" value="ABA50649"/>
    <property type="gene ID" value="BURPS1710b_2008"/>
</dbReference>
<dbReference type="GeneID" id="92978955"/>
<dbReference type="KEGG" id="bpm:BURPS1710b_2008"/>
<dbReference type="HOGENOM" id="CLU_000604_1_2_4"/>
<dbReference type="Proteomes" id="UP000002700">
    <property type="component" value="Chromosome I"/>
</dbReference>
<dbReference type="GO" id="GO:0005886">
    <property type="term" value="C:plasma membrane"/>
    <property type="evidence" value="ECO:0007669"/>
    <property type="project" value="UniProtKB-SubCell"/>
</dbReference>
<dbReference type="GO" id="GO:0005524">
    <property type="term" value="F:ATP binding"/>
    <property type="evidence" value="ECO:0007669"/>
    <property type="project" value="UniProtKB-KW"/>
</dbReference>
<dbReference type="GO" id="GO:0016887">
    <property type="term" value="F:ATP hydrolysis activity"/>
    <property type="evidence" value="ECO:0007669"/>
    <property type="project" value="InterPro"/>
</dbReference>
<dbReference type="GO" id="GO:0022857">
    <property type="term" value="F:transmembrane transporter activity"/>
    <property type="evidence" value="ECO:0007669"/>
    <property type="project" value="InterPro"/>
</dbReference>
<dbReference type="CDD" id="cd03263">
    <property type="entry name" value="ABC_subfamily_A"/>
    <property type="match status" value="1"/>
</dbReference>
<dbReference type="FunFam" id="3.40.50.300:FF:000589">
    <property type="entry name" value="ABC transporter, ATP-binding subunit"/>
    <property type="match status" value="1"/>
</dbReference>
<dbReference type="Gene3D" id="3.40.50.300">
    <property type="entry name" value="P-loop containing nucleotide triphosphate hydrolases"/>
    <property type="match status" value="1"/>
</dbReference>
<dbReference type="InterPro" id="IPR003593">
    <property type="entry name" value="AAA+_ATPase"/>
</dbReference>
<dbReference type="InterPro" id="IPR003439">
    <property type="entry name" value="ABC_transporter-like_ATP-bd"/>
</dbReference>
<dbReference type="InterPro" id="IPR017871">
    <property type="entry name" value="ABC_transporter-like_CS"/>
</dbReference>
<dbReference type="InterPro" id="IPR050763">
    <property type="entry name" value="ABC_transporter_ATP-binding"/>
</dbReference>
<dbReference type="InterPro" id="IPR005978">
    <property type="entry name" value="ABC_transptNodI"/>
</dbReference>
<dbReference type="InterPro" id="IPR027417">
    <property type="entry name" value="P-loop_NTPase"/>
</dbReference>
<dbReference type="NCBIfam" id="TIGR01288">
    <property type="entry name" value="nodI"/>
    <property type="match status" value="1"/>
</dbReference>
<dbReference type="NCBIfam" id="NF010060">
    <property type="entry name" value="PRK13537.1"/>
    <property type="match status" value="1"/>
</dbReference>
<dbReference type="PANTHER" id="PTHR42711">
    <property type="entry name" value="ABC TRANSPORTER ATP-BINDING PROTEIN"/>
    <property type="match status" value="1"/>
</dbReference>
<dbReference type="PANTHER" id="PTHR42711:SF5">
    <property type="entry name" value="ABC TRANSPORTER ATP-BINDING PROTEIN NATA"/>
    <property type="match status" value="1"/>
</dbReference>
<dbReference type="Pfam" id="PF00005">
    <property type="entry name" value="ABC_tran"/>
    <property type="match status" value="1"/>
</dbReference>
<dbReference type="SMART" id="SM00382">
    <property type="entry name" value="AAA"/>
    <property type="match status" value="1"/>
</dbReference>
<dbReference type="SUPFAM" id="SSF52540">
    <property type="entry name" value="P-loop containing nucleoside triphosphate hydrolases"/>
    <property type="match status" value="1"/>
</dbReference>
<dbReference type="PROSITE" id="PS00211">
    <property type="entry name" value="ABC_TRANSPORTER_1"/>
    <property type="match status" value="1"/>
</dbReference>
<dbReference type="PROSITE" id="PS50893">
    <property type="entry name" value="ABC_TRANSPORTER_2"/>
    <property type="match status" value="1"/>
</dbReference>
<dbReference type="PROSITE" id="PS51240">
    <property type="entry name" value="NODI"/>
    <property type="match status" value="1"/>
</dbReference>
<reference key="1">
    <citation type="journal article" date="2010" name="Genome Biol. Evol.">
        <title>Continuing evolution of Burkholderia mallei through genome reduction and large-scale rearrangements.</title>
        <authorList>
            <person name="Losada L."/>
            <person name="Ronning C.M."/>
            <person name="DeShazer D."/>
            <person name="Woods D."/>
            <person name="Fedorova N."/>
            <person name="Kim H.S."/>
            <person name="Shabalina S.A."/>
            <person name="Pearson T.R."/>
            <person name="Brinkac L."/>
            <person name="Tan P."/>
            <person name="Nandi T."/>
            <person name="Crabtree J."/>
            <person name="Badger J."/>
            <person name="Beckstrom-Sternberg S."/>
            <person name="Saqib M."/>
            <person name="Schutzer S.E."/>
            <person name="Keim P."/>
            <person name="Nierman W.C."/>
        </authorList>
    </citation>
    <scope>NUCLEOTIDE SEQUENCE [LARGE SCALE GENOMIC DNA]</scope>
    <source>
        <strain>1710b</strain>
    </source>
</reference>
<accession>Q3JSQ0</accession>
<gene>
    <name evidence="1" type="primary">nodI</name>
    <name type="ordered locus">BURPS1710b_2008</name>
</gene>
<proteinExistence type="inferred from homology"/>
<evidence type="ECO:0000255" key="1">
    <source>
        <dbReference type="HAMAP-Rule" id="MF_01704"/>
    </source>
</evidence>
<evidence type="ECO:0000305" key="2"/>
<feature type="chain" id="PRO_0000272598" description="Nod factor export ATP-binding protein I">
    <location>
        <begin position="1"/>
        <end position="304"/>
    </location>
</feature>
<feature type="domain" description="ABC transporter" evidence="1">
    <location>
        <begin position="6"/>
        <end position="236"/>
    </location>
</feature>
<feature type="binding site" evidence="1">
    <location>
        <begin position="38"/>
        <end position="45"/>
    </location>
    <ligand>
        <name>ATP</name>
        <dbReference type="ChEBI" id="CHEBI:30616"/>
    </ligand>
</feature>
<protein>
    <recommendedName>
        <fullName evidence="1">Nod factor export ATP-binding protein I</fullName>
        <ecNumber evidence="1">7.6.2.-</ecNumber>
    </recommendedName>
    <alternativeName>
        <fullName evidence="1">Nodulation ATP-binding protein I</fullName>
    </alternativeName>
</protein>
<keyword id="KW-0067">ATP-binding</keyword>
<keyword id="KW-0997">Cell inner membrane</keyword>
<keyword id="KW-1003">Cell membrane</keyword>
<keyword id="KW-0472">Membrane</keyword>
<keyword id="KW-0536">Nodulation</keyword>
<keyword id="KW-0547">Nucleotide-binding</keyword>
<keyword id="KW-1278">Translocase</keyword>
<keyword id="KW-0813">Transport</keyword>
<sequence length="304" mass="33833">MSVAPIDFQQVEKRYDDKLVVDGLSFHVQPGECFGLLGPNGAGKTTTLKMLLGITHPDAGSISLCGEPVPSRARHARQRVGVVPQFDNLDPDFTVRENLLVFARYFGLTAHAARALVPPLLEFAKLESKADAKVGELSGGMKRRLTLARALVNDPDVLVLDEPTTGLDPQARHLMWERLRSLLARGKTILLTTHFMEEAERLCHRLCVIEEGRKIAEGAPRMLIEAEIGCDVIEIYGPDPVQLRDELAPFAERTEISGETLFCYVDNPEPIHARLKGRAGLRYLHRPANLEDVFLRLTGREMLD</sequence>
<name>NODI_BURP1</name>
<comment type="function">
    <text evidence="1">Part of the ABC transporter complex NodIJ involved in the export of the nodulation factors (Nod factors), the bacterial signal molecules that induce symbiosis and subsequent nodulation induction. Nod factors are LCO (lipo-chitin oligosaccharide), a modified beta-1,4-linked N-acetylglucosamine oligosaccharide. This subunit is responsible for energy coupling to the transport system.</text>
</comment>
<comment type="subunit">
    <text evidence="1">The complex is composed of two ATP-binding proteins (NodI) and two transmembrane proteins (NodJ).</text>
</comment>
<comment type="subcellular location">
    <subcellularLocation>
        <location evidence="1">Cell inner membrane</location>
        <topology evidence="1">Peripheral membrane protein</topology>
    </subcellularLocation>
</comment>
<comment type="similarity">
    <text evidence="1">Belongs to the ABC transporter superfamily. Lipooligosaccharide exporter (TC 3.A.1.102) family.</text>
</comment>
<comment type="sequence caution" evidence="2">
    <conflict type="erroneous initiation">
        <sequence resource="EMBL-CDS" id="ABA50649"/>
    </conflict>
</comment>
<organism>
    <name type="scientific">Burkholderia pseudomallei (strain 1710b)</name>
    <dbReference type="NCBI Taxonomy" id="320372"/>
    <lineage>
        <taxon>Bacteria</taxon>
        <taxon>Pseudomonadati</taxon>
        <taxon>Pseudomonadota</taxon>
        <taxon>Betaproteobacteria</taxon>
        <taxon>Burkholderiales</taxon>
        <taxon>Burkholderiaceae</taxon>
        <taxon>Burkholderia</taxon>
        <taxon>pseudomallei group</taxon>
    </lineage>
</organism>